<gene>
    <name evidence="1" type="primary">rpsD</name>
    <name type="ordered locus">Ent638_3727</name>
</gene>
<comment type="function">
    <text evidence="1">One of the primary rRNA binding proteins, it binds directly to 16S rRNA where it nucleates assembly of the body of the 30S subunit.</text>
</comment>
<comment type="function">
    <text evidence="1">With S5 and S12 plays an important role in translational accuracy.</text>
</comment>
<comment type="subunit">
    <text evidence="1">Part of the 30S ribosomal subunit. Contacts protein S5. The interaction surface between S4 and S5 is involved in control of translational fidelity.</text>
</comment>
<comment type="similarity">
    <text evidence="1">Belongs to the universal ribosomal protein uS4 family.</text>
</comment>
<feature type="chain" id="PRO_0000322296" description="Small ribosomal subunit protein uS4">
    <location>
        <begin position="1"/>
        <end position="206"/>
    </location>
</feature>
<feature type="domain" description="S4 RNA-binding" evidence="1">
    <location>
        <begin position="96"/>
        <end position="156"/>
    </location>
</feature>
<reference key="1">
    <citation type="journal article" date="2010" name="PLoS Genet.">
        <title>Genome sequence of the plant growth promoting endophytic bacterium Enterobacter sp. 638.</title>
        <authorList>
            <person name="Taghavi S."/>
            <person name="van der Lelie D."/>
            <person name="Hoffman A."/>
            <person name="Zhang Y.B."/>
            <person name="Walla M.D."/>
            <person name="Vangronsveld J."/>
            <person name="Newman L."/>
            <person name="Monchy S."/>
        </authorList>
    </citation>
    <scope>NUCLEOTIDE SEQUENCE [LARGE SCALE GENOMIC DNA]</scope>
    <source>
        <strain>638</strain>
    </source>
</reference>
<organism>
    <name type="scientific">Enterobacter sp. (strain 638)</name>
    <dbReference type="NCBI Taxonomy" id="399742"/>
    <lineage>
        <taxon>Bacteria</taxon>
        <taxon>Pseudomonadati</taxon>
        <taxon>Pseudomonadota</taxon>
        <taxon>Gammaproteobacteria</taxon>
        <taxon>Enterobacterales</taxon>
        <taxon>Enterobacteriaceae</taxon>
        <taxon>Enterobacter</taxon>
    </lineage>
</organism>
<proteinExistence type="inferred from homology"/>
<accession>A4WFA4</accession>
<keyword id="KW-0687">Ribonucleoprotein</keyword>
<keyword id="KW-0689">Ribosomal protein</keyword>
<keyword id="KW-0694">RNA-binding</keyword>
<keyword id="KW-0699">rRNA-binding</keyword>
<name>RS4_ENT38</name>
<protein>
    <recommendedName>
        <fullName evidence="1">Small ribosomal subunit protein uS4</fullName>
    </recommendedName>
    <alternativeName>
        <fullName evidence="2">30S ribosomal protein S4</fullName>
    </alternativeName>
</protein>
<sequence length="206" mass="23534">MARYLGPKLKLSRREGTDLFLKSGVRAIDTKCKIEQAPGQHGARKPRLSDYGVQLREKQKVRRTYGVLERQFRNYYKEAARLKGNTGENLLALLEGRLDNVVYRMGFGATRAESRQLVSHKAIMVNGRVVNIASYQVKANDVVCIREKAKKQSRVKAALELAEQREKPTWLEVDASKMEGTFKRQPERSDLSADINEHLIVELYSK</sequence>
<dbReference type="EMBL" id="CP000653">
    <property type="protein sequence ID" value="ABP62384.1"/>
    <property type="molecule type" value="Genomic_DNA"/>
</dbReference>
<dbReference type="RefSeq" id="WP_015960704.1">
    <property type="nucleotide sequence ID" value="NC_009436.1"/>
</dbReference>
<dbReference type="SMR" id="A4WFA4"/>
<dbReference type="STRING" id="399742.Ent638_3727"/>
<dbReference type="GeneID" id="93306702"/>
<dbReference type="KEGG" id="ent:Ent638_3727"/>
<dbReference type="eggNOG" id="COG0522">
    <property type="taxonomic scope" value="Bacteria"/>
</dbReference>
<dbReference type="HOGENOM" id="CLU_092403_0_2_6"/>
<dbReference type="OrthoDB" id="9803672at2"/>
<dbReference type="Proteomes" id="UP000000230">
    <property type="component" value="Chromosome"/>
</dbReference>
<dbReference type="GO" id="GO:0015935">
    <property type="term" value="C:small ribosomal subunit"/>
    <property type="evidence" value="ECO:0007669"/>
    <property type="project" value="InterPro"/>
</dbReference>
<dbReference type="GO" id="GO:0019843">
    <property type="term" value="F:rRNA binding"/>
    <property type="evidence" value="ECO:0007669"/>
    <property type="project" value="UniProtKB-UniRule"/>
</dbReference>
<dbReference type="GO" id="GO:0003735">
    <property type="term" value="F:structural constituent of ribosome"/>
    <property type="evidence" value="ECO:0007669"/>
    <property type="project" value="InterPro"/>
</dbReference>
<dbReference type="GO" id="GO:0042274">
    <property type="term" value="P:ribosomal small subunit biogenesis"/>
    <property type="evidence" value="ECO:0007669"/>
    <property type="project" value="TreeGrafter"/>
</dbReference>
<dbReference type="GO" id="GO:0006412">
    <property type="term" value="P:translation"/>
    <property type="evidence" value="ECO:0007669"/>
    <property type="project" value="UniProtKB-UniRule"/>
</dbReference>
<dbReference type="CDD" id="cd00165">
    <property type="entry name" value="S4"/>
    <property type="match status" value="1"/>
</dbReference>
<dbReference type="FunFam" id="1.10.1050.10:FF:000001">
    <property type="entry name" value="30S ribosomal protein S4"/>
    <property type="match status" value="1"/>
</dbReference>
<dbReference type="FunFam" id="3.10.290.10:FF:000001">
    <property type="entry name" value="30S ribosomal protein S4"/>
    <property type="match status" value="1"/>
</dbReference>
<dbReference type="Gene3D" id="1.10.1050.10">
    <property type="entry name" value="Ribosomal Protein S4 Delta 41, Chain A, domain 1"/>
    <property type="match status" value="1"/>
</dbReference>
<dbReference type="Gene3D" id="3.10.290.10">
    <property type="entry name" value="RNA-binding S4 domain"/>
    <property type="match status" value="1"/>
</dbReference>
<dbReference type="HAMAP" id="MF_01306_B">
    <property type="entry name" value="Ribosomal_uS4_B"/>
    <property type="match status" value="1"/>
</dbReference>
<dbReference type="InterPro" id="IPR022801">
    <property type="entry name" value="Ribosomal_uS4"/>
</dbReference>
<dbReference type="InterPro" id="IPR005709">
    <property type="entry name" value="Ribosomal_uS4_bac-type"/>
</dbReference>
<dbReference type="InterPro" id="IPR018079">
    <property type="entry name" value="Ribosomal_uS4_CS"/>
</dbReference>
<dbReference type="InterPro" id="IPR001912">
    <property type="entry name" value="Ribosomal_uS4_N"/>
</dbReference>
<dbReference type="InterPro" id="IPR002942">
    <property type="entry name" value="S4_RNA-bd"/>
</dbReference>
<dbReference type="InterPro" id="IPR036986">
    <property type="entry name" value="S4_RNA-bd_sf"/>
</dbReference>
<dbReference type="NCBIfam" id="NF003717">
    <property type="entry name" value="PRK05327.1"/>
    <property type="match status" value="1"/>
</dbReference>
<dbReference type="NCBIfam" id="TIGR01017">
    <property type="entry name" value="rpsD_bact"/>
    <property type="match status" value="1"/>
</dbReference>
<dbReference type="PANTHER" id="PTHR11831">
    <property type="entry name" value="30S 40S RIBOSOMAL PROTEIN"/>
    <property type="match status" value="1"/>
</dbReference>
<dbReference type="PANTHER" id="PTHR11831:SF4">
    <property type="entry name" value="SMALL RIBOSOMAL SUBUNIT PROTEIN US4M"/>
    <property type="match status" value="1"/>
</dbReference>
<dbReference type="Pfam" id="PF00163">
    <property type="entry name" value="Ribosomal_S4"/>
    <property type="match status" value="1"/>
</dbReference>
<dbReference type="Pfam" id="PF01479">
    <property type="entry name" value="S4"/>
    <property type="match status" value="1"/>
</dbReference>
<dbReference type="SMART" id="SM01390">
    <property type="entry name" value="Ribosomal_S4"/>
    <property type="match status" value="1"/>
</dbReference>
<dbReference type="SMART" id="SM00363">
    <property type="entry name" value="S4"/>
    <property type="match status" value="1"/>
</dbReference>
<dbReference type="SUPFAM" id="SSF55174">
    <property type="entry name" value="Alpha-L RNA-binding motif"/>
    <property type="match status" value="1"/>
</dbReference>
<dbReference type="PROSITE" id="PS00632">
    <property type="entry name" value="RIBOSOMAL_S4"/>
    <property type="match status" value="1"/>
</dbReference>
<dbReference type="PROSITE" id="PS50889">
    <property type="entry name" value="S4"/>
    <property type="match status" value="1"/>
</dbReference>
<evidence type="ECO:0000255" key="1">
    <source>
        <dbReference type="HAMAP-Rule" id="MF_01306"/>
    </source>
</evidence>
<evidence type="ECO:0000305" key="2"/>